<accession>Q4ULK0</accession>
<gene>
    <name evidence="1" type="primary">rpsO</name>
    <name type="ordered locus">RF_0722</name>
</gene>
<name>RS15_RICFE</name>
<proteinExistence type="inferred from homology"/>
<feature type="chain" id="PRO_0000115526" description="Small ribosomal subunit protein uS15">
    <location>
        <begin position="1"/>
        <end position="91"/>
    </location>
</feature>
<reference key="1">
    <citation type="journal article" date="2005" name="PLoS Biol.">
        <title>The genome sequence of Rickettsia felis identifies the first putative conjugative plasmid in an obligate intracellular parasite.</title>
        <authorList>
            <person name="Ogata H."/>
            <person name="Renesto P."/>
            <person name="Audic S."/>
            <person name="Robert C."/>
            <person name="Blanc G."/>
            <person name="Fournier P.-E."/>
            <person name="Parinello H."/>
            <person name="Claverie J.-M."/>
            <person name="Raoult D."/>
        </authorList>
    </citation>
    <scope>NUCLEOTIDE SEQUENCE [LARGE SCALE GENOMIC DNA]</scope>
    <source>
        <strain>ATCC VR-1525 / URRWXCal2</strain>
    </source>
</reference>
<protein>
    <recommendedName>
        <fullName evidence="1">Small ribosomal subunit protein uS15</fullName>
    </recommendedName>
    <alternativeName>
        <fullName evidence="2">30S ribosomal protein S15</fullName>
    </alternativeName>
</protein>
<sequence>MSITQERKQKLIKEYAITENDTGSSAVQCAILTERINNLTEHFKFNHKDHTSRRGLLILVGRRRRLLNYIKKNNVSEYLDLISKLGIRKIK</sequence>
<organism>
    <name type="scientific">Rickettsia felis (strain ATCC VR-1525 / URRWXCal2)</name>
    <name type="common">Rickettsia azadi</name>
    <dbReference type="NCBI Taxonomy" id="315456"/>
    <lineage>
        <taxon>Bacteria</taxon>
        <taxon>Pseudomonadati</taxon>
        <taxon>Pseudomonadota</taxon>
        <taxon>Alphaproteobacteria</taxon>
        <taxon>Rickettsiales</taxon>
        <taxon>Rickettsiaceae</taxon>
        <taxon>Rickettsieae</taxon>
        <taxon>Rickettsia</taxon>
        <taxon>spotted fever group</taxon>
    </lineage>
</organism>
<dbReference type="EMBL" id="CP000053">
    <property type="protein sequence ID" value="AAY61573.1"/>
    <property type="molecule type" value="Genomic_DNA"/>
</dbReference>
<dbReference type="SMR" id="Q4ULK0"/>
<dbReference type="STRING" id="315456.RF_0722"/>
<dbReference type="KEGG" id="rfe:RF_0722"/>
<dbReference type="eggNOG" id="COG0184">
    <property type="taxonomic scope" value="Bacteria"/>
</dbReference>
<dbReference type="HOGENOM" id="CLU_148518_0_0_5"/>
<dbReference type="OrthoDB" id="9799262at2"/>
<dbReference type="Proteomes" id="UP000008548">
    <property type="component" value="Chromosome"/>
</dbReference>
<dbReference type="GO" id="GO:0022627">
    <property type="term" value="C:cytosolic small ribosomal subunit"/>
    <property type="evidence" value="ECO:0007669"/>
    <property type="project" value="TreeGrafter"/>
</dbReference>
<dbReference type="GO" id="GO:0019843">
    <property type="term" value="F:rRNA binding"/>
    <property type="evidence" value="ECO:0007669"/>
    <property type="project" value="UniProtKB-UniRule"/>
</dbReference>
<dbReference type="GO" id="GO:0003735">
    <property type="term" value="F:structural constituent of ribosome"/>
    <property type="evidence" value="ECO:0007669"/>
    <property type="project" value="InterPro"/>
</dbReference>
<dbReference type="GO" id="GO:0006412">
    <property type="term" value="P:translation"/>
    <property type="evidence" value="ECO:0007669"/>
    <property type="project" value="UniProtKB-UniRule"/>
</dbReference>
<dbReference type="CDD" id="cd00353">
    <property type="entry name" value="Ribosomal_S15p_S13e"/>
    <property type="match status" value="1"/>
</dbReference>
<dbReference type="FunFam" id="1.10.287.10:FF:000002">
    <property type="entry name" value="30S ribosomal protein S15"/>
    <property type="match status" value="1"/>
</dbReference>
<dbReference type="Gene3D" id="6.10.250.3130">
    <property type="match status" value="1"/>
</dbReference>
<dbReference type="Gene3D" id="1.10.287.10">
    <property type="entry name" value="S15/NS1, RNA-binding"/>
    <property type="match status" value="1"/>
</dbReference>
<dbReference type="HAMAP" id="MF_01343_B">
    <property type="entry name" value="Ribosomal_uS15_B"/>
    <property type="match status" value="1"/>
</dbReference>
<dbReference type="InterPro" id="IPR000589">
    <property type="entry name" value="Ribosomal_uS15"/>
</dbReference>
<dbReference type="InterPro" id="IPR005290">
    <property type="entry name" value="Ribosomal_uS15_bac-type"/>
</dbReference>
<dbReference type="InterPro" id="IPR009068">
    <property type="entry name" value="uS15_NS1_RNA-bd_sf"/>
</dbReference>
<dbReference type="NCBIfam" id="TIGR00952">
    <property type="entry name" value="S15_bact"/>
    <property type="match status" value="1"/>
</dbReference>
<dbReference type="PANTHER" id="PTHR23321">
    <property type="entry name" value="RIBOSOMAL PROTEIN S15, BACTERIAL AND ORGANELLAR"/>
    <property type="match status" value="1"/>
</dbReference>
<dbReference type="PANTHER" id="PTHR23321:SF26">
    <property type="entry name" value="SMALL RIBOSOMAL SUBUNIT PROTEIN US15M"/>
    <property type="match status" value="1"/>
</dbReference>
<dbReference type="Pfam" id="PF00312">
    <property type="entry name" value="Ribosomal_S15"/>
    <property type="match status" value="1"/>
</dbReference>
<dbReference type="SMART" id="SM01387">
    <property type="entry name" value="Ribosomal_S15"/>
    <property type="match status" value="1"/>
</dbReference>
<dbReference type="SUPFAM" id="SSF47060">
    <property type="entry name" value="S15/NS1 RNA-binding domain"/>
    <property type="match status" value="1"/>
</dbReference>
<dbReference type="PROSITE" id="PS00362">
    <property type="entry name" value="RIBOSOMAL_S15"/>
    <property type="match status" value="1"/>
</dbReference>
<keyword id="KW-0687">Ribonucleoprotein</keyword>
<keyword id="KW-0689">Ribosomal protein</keyword>
<keyword id="KW-0694">RNA-binding</keyword>
<keyword id="KW-0699">rRNA-binding</keyword>
<evidence type="ECO:0000255" key="1">
    <source>
        <dbReference type="HAMAP-Rule" id="MF_01343"/>
    </source>
</evidence>
<evidence type="ECO:0000305" key="2"/>
<comment type="function">
    <text evidence="1">One of the primary rRNA binding proteins, it binds directly to 16S rRNA where it helps nucleate assembly of the platform of the 30S subunit by binding and bridging several RNA helices of the 16S rRNA.</text>
</comment>
<comment type="function">
    <text evidence="1">Forms an intersubunit bridge (bridge B4) with the 23S rRNA of the 50S subunit in the ribosome.</text>
</comment>
<comment type="subunit">
    <text evidence="1">Part of the 30S ribosomal subunit. Forms a bridge to the 50S subunit in the 70S ribosome, contacting the 23S rRNA.</text>
</comment>
<comment type="similarity">
    <text evidence="1">Belongs to the universal ribosomal protein uS15 family.</text>
</comment>